<proteinExistence type="evidence at protein level"/>
<comment type="function">
    <text evidence="7 8 11">Hybrid PKS-NRPS synthetase; part of the gene cluster that mediates the biosynthesis of pyranonigrins, a family of antioxidative compounds (PubMed:24106156, PubMed:26414728). The first step of pyranonigrins biosynthesis is performed by the hybrid PKS-NRPS synthetase that condenses 6 malonyl-CoA units to an acetyl starter unit, to form a 1,3,5-trioxotetradecane-6,8-dienyl-ACP (PubMed:24106156). The enoyl reductase (ER) domain of pynA is likely to be functional during the first two rounds of polyketide chain extension, to generate the saturated C-C bonds of the alkyl side chain (Probable). PynA subsequently forms the amide bond between the acyl chain and L-serine (PubMed:24106156, PubMed:26414728). Although pynA has a terminal reductase domain, it appears to require the thioesterase pynI for the release of the straight-chain intermediate from pynA via the formation of a tetramic acid pyranonigrin J (PubMed:26414728). The methyltransferase pynC then coverts pyranonigrin J to pyranonigrin I via N-methylation (PubMed:26414728). The FAD-dependent monooxygenase pynG catalyzes an epoxidation-mediated cyclization to form the dihydro-gamma-pyrone moiety, followed by pynD-catalyzed oxidation of the alcohol to the ketone and enolization to yield the characteristic tetramic acid-fused gamma-pyrone core of pyranonigrin H (PubMed:26414728). Pyranonigrin H is substrate of pynH for dehydration-mediated exo-methylene formation from the serine side chain to produce pyranonigrin E, before the oxidase pynE reduces the exo-methylene of pyranonigrin E into a pendant methyl to form pyranonigrin G (PubMed:26414728). The FAD-linked oxidoreductase pynB performs the reverse reaction and converts pyranonigrin G back to pyranonigrin E (PubMed:26414728).</text>
</comment>
<comment type="pathway">
    <text evidence="7 8">Secondary metabolite biosynthesis.</text>
</comment>
<comment type="induction">
    <text evidence="7">Expression is positively regulated by the cluster-specific transcription factor pynR.</text>
</comment>
<comment type="domain">
    <text evidence="11">The N-terminal part acts as a polyketide synthase and includes a ketosynthase (KS) domain that catalyzes repeated decarboxylative condensation to elongate the polyketide backbone; a malonyl-CoA:ACP transacylase (MAT) domain that selects and transfers the extender unit malonyl-CoA; a dehydratase (DH) domain that reduces hydroxyl groups to enoyl groups; an enoylreductase (ER) domain that reduces enoyl groups to alkyl group; a ketoreductase (KR) domain that catalyzes beta-ketoreduction steps; and an acyl-carrier protein (ACP) that serves as the tether of the growing and completed polyketide via its phosphopantetheinyl arm.</text>
</comment>
<comment type="domain">
    <text evidence="11">The C-terminal part acts as an NRP synthetase composed of discrete domains (adenylation (A), thiolation (T) or peptidyl carrier protein (PCP) and condensation (C) domains) which when grouped together are referred to as a single module (Probable). Each module is responsible for the recognition (via the A domain) and incorporation of a single amino acid into the growing peptide product (Probable). PynA contains one module and terminates in a thioesterase domain (TE) that releases the newly synthesized peptide from the enzyme (Probable).</text>
</comment>
<comment type="disruption phenotype">
    <text evidence="8">Abolishes the production of all pyranonigrins.</text>
</comment>
<comment type="similarity">
    <text evidence="10">In the C-terminal section; belongs to the NRP synthetase family.</text>
</comment>
<accession>A5ABG0</accession>
<dbReference type="EC" id="2.3.1.-" evidence="7"/>
<dbReference type="EC" id="6.3.2.-" evidence="7"/>
<dbReference type="EMBL" id="AM270218">
    <property type="protein sequence ID" value="CAK48258.1"/>
    <property type="molecule type" value="Genomic_DNA"/>
</dbReference>
<dbReference type="SMR" id="A5ABG0"/>
<dbReference type="EnsemblFungi" id="CAK48258">
    <property type="protein sequence ID" value="CAK48258"/>
    <property type="gene ID" value="An11g00250"/>
</dbReference>
<dbReference type="VEuPathDB" id="FungiDB:An11g00250"/>
<dbReference type="HOGENOM" id="CLU_000022_37_9_1"/>
<dbReference type="Proteomes" id="UP000006706">
    <property type="component" value="Chromosome 7R"/>
</dbReference>
<dbReference type="GO" id="GO:0005737">
    <property type="term" value="C:cytoplasm"/>
    <property type="evidence" value="ECO:0007669"/>
    <property type="project" value="TreeGrafter"/>
</dbReference>
<dbReference type="GO" id="GO:0005886">
    <property type="term" value="C:plasma membrane"/>
    <property type="evidence" value="ECO:0007669"/>
    <property type="project" value="TreeGrafter"/>
</dbReference>
<dbReference type="GO" id="GO:0004312">
    <property type="term" value="F:fatty acid synthase activity"/>
    <property type="evidence" value="ECO:0007669"/>
    <property type="project" value="TreeGrafter"/>
</dbReference>
<dbReference type="GO" id="GO:0016874">
    <property type="term" value="F:ligase activity"/>
    <property type="evidence" value="ECO:0007669"/>
    <property type="project" value="UniProtKB-KW"/>
</dbReference>
<dbReference type="GO" id="GO:0016491">
    <property type="term" value="F:oxidoreductase activity"/>
    <property type="evidence" value="ECO:0007669"/>
    <property type="project" value="InterPro"/>
</dbReference>
<dbReference type="GO" id="GO:0031177">
    <property type="term" value="F:phosphopantetheine binding"/>
    <property type="evidence" value="ECO:0007669"/>
    <property type="project" value="InterPro"/>
</dbReference>
<dbReference type="GO" id="GO:0006633">
    <property type="term" value="P:fatty acid biosynthetic process"/>
    <property type="evidence" value="ECO:0007669"/>
    <property type="project" value="TreeGrafter"/>
</dbReference>
<dbReference type="GO" id="GO:0019748">
    <property type="term" value="P:secondary metabolic process"/>
    <property type="evidence" value="ECO:0000317"/>
    <property type="project" value="AspGD"/>
</dbReference>
<dbReference type="GO" id="GO:0044550">
    <property type="term" value="P:secondary metabolite biosynthetic process"/>
    <property type="evidence" value="ECO:0007669"/>
    <property type="project" value="UniProtKB-ARBA"/>
</dbReference>
<dbReference type="CDD" id="cd05930">
    <property type="entry name" value="A_NRPS"/>
    <property type="match status" value="1"/>
</dbReference>
<dbReference type="CDD" id="cd20483">
    <property type="entry name" value="C_PKS-NRPS"/>
    <property type="match status" value="1"/>
</dbReference>
<dbReference type="CDD" id="cd05195">
    <property type="entry name" value="enoyl_red"/>
    <property type="match status" value="1"/>
</dbReference>
<dbReference type="CDD" id="cd00833">
    <property type="entry name" value="PKS"/>
    <property type="match status" value="1"/>
</dbReference>
<dbReference type="FunFam" id="3.10.129.110:FF:000006">
    <property type="entry name" value="Aspergillus niger contig An11c0010, genomic contig"/>
    <property type="match status" value="1"/>
</dbReference>
<dbReference type="FunFam" id="3.30.300.30:FF:000080">
    <property type="entry name" value="Aspergillus niger contig An11c0010, genomic contig"/>
    <property type="match status" value="1"/>
</dbReference>
<dbReference type="FunFam" id="3.40.50.720:FF:001043">
    <property type="entry name" value="Aspergillus niger contig An11c0010, genomic contig"/>
    <property type="match status" value="1"/>
</dbReference>
<dbReference type="FunFam" id="3.40.50.720:FF:001166">
    <property type="entry name" value="Aspergillus niger contig An11c0010, genomic contig"/>
    <property type="match status" value="1"/>
</dbReference>
<dbReference type="FunFam" id="3.40.50.720:FF:001435">
    <property type="entry name" value="Aspergillus niger contig An11c0010, genomic contig"/>
    <property type="match status" value="1"/>
</dbReference>
<dbReference type="FunFam" id="3.40.50.720:FF:000209">
    <property type="entry name" value="Polyketide synthase Pks12"/>
    <property type="match status" value="1"/>
</dbReference>
<dbReference type="FunFam" id="3.40.47.10:FF:000019">
    <property type="entry name" value="Polyketide synthase type I"/>
    <property type="match status" value="1"/>
</dbReference>
<dbReference type="FunFam" id="3.40.366.10:FF:000002">
    <property type="entry name" value="Probable polyketide synthase 2"/>
    <property type="match status" value="1"/>
</dbReference>
<dbReference type="Gene3D" id="3.30.300.30">
    <property type="match status" value="1"/>
</dbReference>
<dbReference type="Gene3D" id="3.30.70.3290">
    <property type="match status" value="1"/>
</dbReference>
<dbReference type="Gene3D" id="3.40.47.10">
    <property type="match status" value="1"/>
</dbReference>
<dbReference type="Gene3D" id="1.10.1200.10">
    <property type="entry name" value="ACP-like"/>
    <property type="match status" value="2"/>
</dbReference>
<dbReference type="Gene3D" id="3.30.559.10">
    <property type="entry name" value="Chloramphenicol acetyltransferase-like domain"/>
    <property type="match status" value="1"/>
</dbReference>
<dbReference type="Gene3D" id="3.40.366.10">
    <property type="entry name" value="Malonyl-Coenzyme A Acyl Carrier Protein, domain 2"/>
    <property type="match status" value="1"/>
</dbReference>
<dbReference type="Gene3D" id="3.90.180.10">
    <property type="entry name" value="Medium-chain alcohol dehydrogenases, catalytic domain"/>
    <property type="match status" value="1"/>
</dbReference>
<dbReference type="Gene3D" id="3.40.50.12780">
    <property type="entry name" value="N-terminal domain of ligase-like"/>
    <property type="match status" value="1"/>
</dbReference>
<dbReference type="Gene3D" id="3.40.50.720">
    <property type="entry name" value="NAD(P)-binding Rossmann-like Domain"/>
    <property type="match status" value="4"/>
</dbReference>
<dbReference type="Gene3D" id="3.30.559.30">
    <property type="entry name" value="Nonribosomal peptide synthetase, condensation domain"/>
    <property type="match status" value="1"/>
</dbReference>
<dbReference type="Gene3D" id="3.10.129.110">
    <property type="entry name" value="Polyketide synthase dehydratase"/>
    <property type="match status" value="1"/>
</dbReference>
<dbReference type="InterPro" id="IPR010071">
    <property type="entry name" value="AA_adenyl_dom"/>
</dbReference>
<dbReference type="InterPro" id="IPR001227">
    <property type="entry name" value="Ac_transferase_dom_sf"/>
</dbReference>
<dbReference type="InterPro" id="IPR036736">
    <property type="entry name" value="ACP-like_sf"/>
</dbReference>
<dbReference type="InterPro" id="IPR014043">
    <property type="entry name" value="Acyl_transferase_dom"/>
</dbReference>
<dbReference type="InterPro" id="IPR016035">
    <property type="entry name" value="Acyl_Trfase/lysoPLipase"/>
</dbReference>
<dbReference type="InterPro" id="IPR013154">
    <property type="entry name" value="ADH-like_N"/>
</dbReference>
<dbReference type="InterPro" id="IPR045851">
    <property type="entry name" value="AMP-bd_C_sf"/>
</dbReference>
<dbReference type="InterPro" id="IPR020845">
    <property type="entry name" value="AMP-binding_CS"/>
</dbReference>
<dbReference type="InterPro" id="IPR000873">
    <property type="entry name" value="AMP-dep_synth/lig_dom"/>
</dbReference>
<dbReference type="InterPro" id="IPR042099">
    <property type="entry name" value="ANL_N_sf"/>
</dbReference>
<dbReference type="InterPro" id="IPR023213">
    <property type="entry name" value="CAT-like_dom_sf"/>
</dbReference>
<dbReference type="InterPro" id="IPR001242">
    <property type="entry name" value="Condensatn"/>
</dbReference>
<dbReference type="InterPro" id="IPR013120">
    <property type="entry name" value="Far_NAD-bd"/>
</dbReference>
<dbReference type="InterPro" id="IPR011032">
    <property type="entry name" value="GroES-like_sf"/>
</dbReference>
<dbReference type="InterPro" id="IPR014031">
    <property type="entry name" value="Ketoacyl_synth_C"/>
</dbReference>
<dbReference type="InterPro" id="IPR014030">
    <property type="entry name" value="Ketoacyl_synth_N"/>
</dbReference>
<dbReference type="InterPro" id="IPR016036">
    <property type="entry name" value="Malonyl_transacylase_ACP-bd"/>
</dbReference>
<dbReference type="InterPro" id="IPR036291">
    <property type="entry name" value="NAD(P)-bd_dom_sf"/>
</dbReference>
<dbReference type="InterPro" id="IPR056501">
    <property type="entry name" value="NAD-bd_HRPKS_sdrA"/>
</dbReference>
<dbReference type="InterPro" id="IPR032821">
    <property type="entry name" value="PKS_assoc"/>
</dbReference>
<dbReference type="InterPro" id="IPR020841">
    <property type="entry name" value="PKS_Beta-ketoAc_synthase_dom"/>
</dbReference>
<dbReference type="InterPro" id="IPR042104">
    <property type="entry name" value="PKS_dehydratase_sf"/>
</dbReference>
<dbReference type="InterPro" id="IPR020807">
    <property type="entry name" value="PKS_DH"/>
</dbReference>
<dbReference type="InterPro" id="IPR049551">
    <property type="entry name" value="PKS_DH_C"/>
</dbReference>
<dbReference type="InterPro" id="IPR049552">
    <property type="entry name" value="PKS_DH_N"/>
</dbReference>
<dbReference type="InterPro" id="IPR020843">
    <property type="entry name" value="PKS_ER"/>
</dbReference>
<dbReference type="InterPro" id="IPR013968">
    <property type="entry name" value="PKS_KR"/>
</dbReference>
<dbReference type="InterPro" id="IPR049900">
    <property type="entry name" value="PKS_mFAS_DH"/>
</dbReference>
<dbReference type="InterPro" id="IPR050091">
    <property type="entry name" value="PKS_NRPS_Biosynth_Enz"/>
</dbReference>
<dbReference type="InterPro" id="IPR020806">
    <property type="entry name" value="PKS_PP-bd"/>
</dbReference>
<dbReference type="InterPro" id="IPR009081">
    <property type="entry name" value="PP-bd_ACP"/>
</dbReference>
<dbReference type="InterPro" id="IPR016039">
    <property type="entry name" value="Thiolase-like"/>
</dbReference>
<dbReference type="NCBIfam" id="TIGR01733">
    <property type="entry name" value="AA-adenyl-dom"/>
    <property type="match status" value="1"/>
</dbReference>
<dbReference type="PANTHER" id="PTHR43775">
    <property type="entry name" value="FATTY ACID SYNTHASE"/>
    <property type="match status" value="1"/>
</dbReference>
<dbReference type="PANTHER" id="PTHR43775:SF37">
    <property type="entry name" value="SI:DKEY-61P9.11"/>
    <property type="match status" value="1"/>
</dbReference>
<dbReference type="Pfam" id="PF23297">
    <property type="entry name" value="ACP_SdgA_C"/>
    <property type="match status" value="1"/>
</dbReference>
<dbReference type="Pfam" id="PF00698">
    <property type="entry name" value="Acyl_transf_1"/>
    <property type="match status" value="1"/>
</dbReference>
<dbReference type="Pfam" id="PF08240">
    <property type="entry name" value="ADH_N"/>
    <property type="match status" value="1"/>
</dbReference>
<dbReference type="Pfam" id="PF13602">
    <property type="entry name" value="ADH_zinc_N_2"/>
    <property type="match status" value="1"/>
</dbReference>
<dbReference type="Pfam" id="PF00501">
    <property type="entry name" value="AMP-binding"/>
    <property type="match status" value="1"/>
</dbReference>
<dbReference type="Pfam" id="PF00668">
    <property type="entry name" value="Condensation"/>
    <property type="match status" value="1"/>
</dbReference>
<dbReference type="Pfam" id="PF16197">
    <property type="entry name" value="KAsynt_C_assoc"/>
    <property type="match status" value="1"/>
</dbReference>
<dbReference type="Pfam" id="PF00109">
    <property type="entry name" value="ketoacyl-synt"/>
    <property type="match status" value="1"/>
</dbReference>
<dbReference type="Pfam" id="PF02801">
    <property type="entry name" value="Ketoacyl-synt_C"/>
    <property type="match status" value="1"/>
</dbReference>
<dbReference type="Pfam" id="PF08659">
    <property type="entry name" value="KR"/>
    <property type="match status" value="1"/>
</dbReference>
<dbReference type="Pfam" id="PF23114">
    <property type="entry name" value="NAD-bd_HRPKS_sdrA"/>
    <property type="match status" value="1"/>
</dbReference>
<dbReference type="Pfam" id="PF07993">
    <property type="entry name" value="NAD_binding_4"/>
    <property type="match status" value="1"/>
</dbReference>
<dbReference type="Pfam" id="PF21089">
    <property type="entry name" value="PKS_DH_N"/>
    <property type="match status" value="1"/>
</dbReference>
<dbReference type="Pfam" id="PF00550">
    <property type="entry name" value="PP-binding"/>
    <property type="match status" value="1"/>
</dbReference>
<dbReference type="Pfam" id="PF14765">
    <property type="entry name" value="PS-DH"/>
    <property type="match status" value="1"/>
</dbReference>
<dbReference type="SMART" id="SM00827">
    <property type="entry name" value="PKS_AT"/>
    <property type="match status" value="1"/>
</dbReference>
<dbReference type="SMART" id="SM00826">
    <property type="entry name" value="PKS_DH"/>
    <property type="match status" value="1"/>
</dbReference>
<dbReference type="SMART" id="SM00829">
    <property type="entry name" value="PKS_ER"/>
    <property type="match status" value="1"/>
</dbReference>
<dbReference type="SMART" id="SM00822">
    <property type="entry name" value="PKS_KR"/>
    <property type="match status" value="1"/>
</dbReference>
<dbReference type="SMART" id="SM00825">
    <property type="entry name" value="PKS_KS"/>
    <property type="match status" value="1"/>
</dbReference>
<dbReference type="SMART" id="SM00823">
    <property type="entry name" value="PKS_PP"/>
    <property type="match status" value="2"/>
</dbReference>
<dbReference type="SUPFAM" id="SSF56801">
    <property type="entry name" value="Acetyl-CoA synthetase-like"/>
    <property type="match status" value="1"/>
</dbReference>
<dbReference type="SUPFAM" id="SSF47336">
    <property type="entry name" value="ACP-like"/>
    <property type="match status" value="2"/>
</dbReference>
<dbReference type="SUPFAM" id="SSF52777">
    <property type="entry name" value="CoA-dependent acyltransferases"/>
    <property type="match status" value="2"/>
</dbReference>
<dbReference type="SUPFAM" id="SSF52151">
    <property type="entry name" value="FabD/lysophospholipase-like"/>
    <property type="match status" value="1"/>
</dbReference>
<dbReference type="SUPFAM" id="SSF50129">
    <property type="entry name" value="GroES-like"/>
    <property type="match status" value="1"/>
</dbReference>
<dbReference type="SUPFAM" id="SSF51735">
    <property type="entry name" value="NAD(P)-binding Rossmann-fold domains"/>
    <property type="match status" value="4"/>
</dbReference>
<dbReference type="SUPFAM" id="SSF55048">
    <property type="entry name" value="Probable ACP-binding domain of malonyl-CoA ACP transacylase"/>
    <property type="match status" value="1"/>
</dbReference>
<dbReference type="SUPFAM" id="SSF53901">
    <property type="entry name" value="Thiolase-like"/>
    <property type="match status" value="1"/>
</dbReference>
<dbReference type="PROSITE" id="PS00455">
    <property type="entry name" value="AMP_BINDING"/>
    <property type="match status" value="1"/>
</dbReference>
<dbReference type="PROSITE" id="PS50075">
    <property type="entry name" value="CARRIER"/>
    <property type="match status" value="2"/>
</dbReference>
<dbReference type="PROSITE" id="PS52004">
    <property type="entry name" value="KS3_2"/>
    <property type="match status" value="1"/>
</dbReference>
<dbReference type="PROSITE" id="PS52019">
    <property type="entry name" value="PKS_MFAS_DH"/>
    <property type="match status" value="1"/>
</dbReference>
<sequence length="3902" mass="429378">MDTPLSSSEISPRFSNTVPSSVSSMTPNADPSVIVGLACRVPGATNPSQLWENIVAQKDLQRKMPADRFNVDAFYHPDGTNKGTTNAKFGYFLDQDIGMFDAGFFRISGKEAEAMDPQQRLLLEVVYEALEDAGITLDEVNGSNTAVFCGSFTNDYNAMVTKDLEYYPKYTVTGTGNAILSNRISYFYNLHGPSVTIDTACSSSLNESDIAIVVGSALHFDPNVFITMTDLGMLSSDGRCRTFDSMGSGYVRGEGICAAVLKRRRDAVYNGDNIRAVVRASGVNHDGIKQGITLPNTNAQEKLIRRTYDLAGLDPNDTQYFEAHGTGTARGDPIEARAIGAVFGSTRSEPLYVGSVKSNIGHLEGASGLAGIIKATLALEESQIPPNMHFKRPNPEIKFDEWKIQVPQDIISWPASANGIRRASINSFGYGGTNAHVILDAYKPEDSEAELQAIPAISSSIPVDRPYLIPLSAHSTKAGALWEDKLTKYLSNEPIGRPAVSDLAVSLSTRRTMHGNRSFIIGKDMPTVLQGLEQPPSPAAAWTRPLKETPRLGFVFTGQGAQWFAMGRKLIQQSHLYRQTLERCDAVLQSLPDGPDWTVLEELLRTEEASRLKETRLSQPICTAMQLATVCLLKQWGIEPSAVVGHSSGEVAAAYAAGILTFENAMIAAYYRGLYMSSGVDGSMTTDGAMMAVGLTEAEAKKEFETYTGQICVAAVNSASSLTLSGDKDAIVRLRDSLVERKIFARLLQVAQAFHSHHMLPLAPKYEEALKNCAGFGTSPARVRMFSSVTARLARPGEMGAGYWTANMTGTVRFSDALTGILLNEEDEQNVDILVEIGPHPALKGPSRQVMNALKLNLPYLASLTRGVNDYESLLTLAGQLFQYGFPVDLIAVNSDHFLQRETGMIQSELHGKRLRDLPTYAWDHKRYWSETRPIREHRLRKQRHSILGARMPGIPERTPHWRNYLRLKEIPWLADHVIDGNAVFPAAGYFSMAIEAAVSMCAEDSVIKEIALRDLNVQSALLLSDSEEGTEVIMELRPATQSAKSKSALWYEFTIYSYGESKILNEHCSGLVSVETNALTLPMRWESSKTFDDLAKESQESIPAETLYDHLTALGLQYGPSFQLLTGDVQTGPGFALAGLDFQPSQFSVQAADLTIAHPTLLDASFHAIFPAIESALGRSLDEPLVPTFVRSFKVSGDFLACCRESREQKFQVTCFTRLPGPRVALSDLTVCSKESNKPLLQFNGLEVTALGSDKTDNSAGRSLFFRTRWQPAFTFLGPDHPAVAQKNISEILDIFAHQFPDTRILHVSDTVDGTRDVLKYLGGRSNERRRFHSITPVFQTQIALEEIDALSQEWPGLVEISEPEPNAYGLVVLSSDAADLDSRQFVKEGGFVLALGPHPQPEGLHDVFFTKDLAVWQKSTDNAQKPKQLSLILPSCPSQRTLDIADGMEMQHGSSVFVTRTSLAALSNEALQAEDIVVLANLDEDVLFEHSSSDQSTFLGIKRLLTAGGKNIVWVLEGGSMDAPKPEHAMIIGLARVARSENDQLRFVTLDLPRASTQETVVRHVWRLLDRSITEDEVAVRDNCIFIPRVEADDQLNSKLRNGTNSQPREEPLGAGRPLALKIGRVGLLETLVFEDDEQILDTQLADDEIEIEVKASAINFRDIAASMGIIDDYKLGDECAGIVTRIGAQVNPQDFQVGDRVAAWRPGQGAHKTIVRNPASLSYKLGDMSFVDAASLPCILTTAYYSLVHVAHLQPGETVLIHSAAGGVGQMAIQVAQYVGARVIATVGSQAKRSLLKSRYGLADDMIFNSRDDSFVRDVLDTTGGRGVDVILNSLAGKLLHATWSCVAPFGRFIEIGKRDIHENSKIDMDPFRRNVAFASVDLVTIFEKNKPLGARLLKECGTLVHKGHITPPETVTELPYSDAVKAFRLLQMGKHTGKVVLVPHAGDRVPVLPSTYRNQPLFKHEKTYLLVGGLGGLGRTLAEWMVRKNARRLAFLSRSGADKEEAKRTVEWLRERGVSVTVFKGDVSRYEDVERAVKAIDNLGGIFQAAMVLQDAPLENMSYQQWQICVEPKVKGTYNLHQATLGKQLDFFICFSSASGSIGSKGQANYSSANCYLDALMRHRREMGLAGTTMNCGMIVGIGAVAANQALLKVMMRSGYDGVNKEELLYQIEEAVLSDNNKKVSRRGVDLHQTITGINMTKADFYWCQKPLYRNLYNNHEFLGQTAIKQGTKSLASQLQGTKSVEERTTLVLSAFIEKVADVLSVSVDSIESANPLSAYGLDSIIAVEFRKWFSRSVGVEIALFDVLGAPSIFALVTKASGLITITTSNDDKAENVDNEGAKGNEDQEVETQQGQLNQPIPPAAAVGPVPMSSFQQRLWFIHNFGDDKTFLNLSITSYLEGNPDATILEKALNELVNRNAILRTGYTEGDEFAEQTVLDMPSISLERIDVSSKPSPTVSLQDVIQRRRAIELEIEEGEVVRPMLVRLSDDQHALVLICHHIAIDRGSAKSSLNQLTGIYDAIRQGRDLDMVPRPGVSYADFAVWHNRLLSSPSLQADLTFWKENLSGMPKTCKLLPFAKSERPLHDDLQRTVVSGILKKSLLNRMKRICSQSGATPFQFLLAAFRAFIFRYTEDSDLGILMIDGDRPHPDLEDVLGFFVNMTPIRCQDSCEGAFDQLLEATKTRTLEAMSHSKAPFDSIVDVVKAKKTTSHFPLAQIALNYQIHGTFPVYRTQDFNVHDVQSVDVPTACDMQLEALEHPERGLDLRLEYSSTLYGSGDMNRFFDNFVTFMSSLIRDHRQPIAEVNLCGALEIAHLEKNFWNTQFTQNPWGSVGVCQRIMENAAKQPEAVAIAASDGAAITYSELVERAQRVAASLKASGVTERQKICVLVDPGVDAVIALLAVLLTRSCYVALDSSFAVDRLAFMASDCGAGVLLFGPELQGLAETVASKSKSGLRLLDTKKAALCEDRFVGDLPSVNEDPFFIIYTSGSTGKPKGVVLSHANTQQMLASVGEYFRFTSDDRFLQQSSLCFDLSVVQIFSALTAGARVCVAKHDIRKDPAALAAFMHETGVTITYFTPTHFALLLEHSWETLHQCSQYRAALFAGERLPVRIARAFYDLQTPAVVYNTWSPSELVVQTTIHKVDKPDDDVFDIPIGRPLPNCRHYVVDAVLNPLPAGFVGEICVGGAQVGLEYLNRPLANATSFVRDLNSTPEDQARGWKKMFRTGDKGSFLPNGLLTFKGRIAGDKQIKLRGFRIDLGEVEQVLYKNASTPDGQGIVDISVIARDSEKSDATSPLTDERRLIAFVIPKKPLQSTQERDEYANYLHRMAQGSLNEYMCPNGYQFLERLPMTIGGKVDRRSLLTMKLDLAQHTTTCTDSRPVTEVAGDDAEILQGVTGQVCSLLGIDRSIAPNDNFFELGGQSILLLRLQSRLKKKFKVTLKLQELIHAPTPLAIAGMIQKQLKGPAGVQNENASKSIDWSEEISLPASLMNTDYSQLSRFPRTDVSSILLTGIDTFIGLHMLATILSNNHNATVYVIGIHDELTADHLVEGLTKYKLLDAHLSTEDVLSRTCAVPGKMTSPRFGLAEEAFRNLADKVRVIFNIAADVSLLKTYVDLKTVNTSAILTLIELATSSHGHLLEIHHLSTWSVPHLQTWKKTSRTRAFASNREEDPSHFTPPTADEYGYFKSRWAAEMYLTQAAARGVPVSIYRASSVSGSRATNVPVPEMDFISNMIMHMIQHRAIPEINSSSLIDEAGDFVVDFLPVDALTSSMYTLASEESAAAPGLQVYHLGSSQPLPLQALVDVIPSLDQSGAAGKCRVVPMQEWLRLVSEGASEEEQLHWMVVKKYFQHGHSMFALDKSHTVAALKKAGKEVEFPAIDVDYLKRLLDERGPGLKR</sequence>
<reference key="1">
    <citation type="journal article" date="2007" name="Nat. Biotechnol.">
        <title>Genome sequencing and analysis of the versatile cell factory Aspergillus niger CBS 513.88.</title>
        <authorList>
            <person name="Pel H.J."/>
            <person name="de Winde J.H."/>
            <person name="Archer D.B."/>
            <person name="Dyer P.S."/>
            <person name="Hofmann G."/>
            <person name="Schaap P.J."/>
            <person name="Turner G."/>
            <person name="de Vries R.P."/>
            <person name="Albang R."/>
            <person name="Albermann K."/>
            <person name="Andersen M.R."/>
            <person name="Bendtsen J.D."/>
            <person name="Benen J.A.E."/>
            <person name="van den Berg M."/>
            <person name="Breestraat S."/>
            <person name="Caddick M.X."/>
            <person name="Contreras R."/>
            <person name="Cornell M."/>
            <person name="Coutinho P.M."/>
            <person name="Danchin E.G.J."/>
            <person name="Debets A.J.M."/>
            <person name="Dekker P."/>
            <person name="van Dijck P.W.M."/>
            <person name="van Dijk A."/>
            <person name="Dijkhuizen L."/>
            <person name="Driessen A.J.M."/>
            <person name="d'Enfert C."/>
            <person name="Geysens S."/>
            <person name="Goosen C."/>
            <person name="Groot G.S.P."/>
            <person name="de Groot P.W.J."/>
            <person name="Guillemette T."/>
            <person name="Henrissat B."/>
            <person name="Herweijer M."/>
            <person name="van den Hombergh J.P.T.W."/>
            <person name="van den Hondel C.A.M.J.J."/>
            <person name="van der Heijden R.T.J.M."/>
            <person name="van der Kaaij R.M."/>
            <person name="Klis F.M."/>
            <person name="Kools H.J."/>
            <person name="Kubicek C.P."/>
            <person name="van Kuyk P.A."/>
            <person name="Lauber J."/>
            <person name="Lu X."/>
            <person name="van der Maarel M.J.E.C."/>
            <person name="Meulenberg R."/>
            <person name="Menke H."/>
            <person name="Mortimer M.A."/>
            <person name="Nielsen J."/>
            <person name="Oliver S.G."/>
            <person name="Olsthoorn M."/>
            <person name="Pal K."/>
            <person name="van Peij N.N.M.E."/>
            <person name="Ram A.F.J."/>
            <person name="Rinas U."/>
            <person name="Roubos J.A."/>
            <person name="Sagt C.M.J."/>
            <person name="Schmoll M."/>
            <person name="Sun J."/>
            <person name="Ussery D."/>
            <person name="Varga J."/>
            <person name="Vervecken W."/>
            <person name="van de Vondervoort P.J.J."/>
            <person name="Wedler H."/>
            <person name="Woesten H.A.B."/>
            <person name="Zeng A.-P."/>
            <person name="van Ooyen A.J.J."/>
            <person name="Visser J."/>
            <person name="Stam H."/>
        </authorList>
    </citation>
    <scope>NUCLEOTIDE SEQUENCE [LARGE SCALE GENOMIC DNA]</scope>
    <source>
        <strain>ATCC MYA-4892 / CBS 513.88 / FGSC A1513</strain>
    </source>
</reference>
<reference key="2">
    <citation type="journal article" date="2013" name="ChemBioChem">
        <title>Pyranonigrin E: a PKS-NRPS hybrid metabolite from Aspergillus niger identified by genome mining.</title>
        <authorList>
            <person name="Awakawa T."/>
            <person name="Yang X.L."/>
            <person name="Wakimoto T."/>
            <person name="Abe I."/>
        </authorList>
    </citation>
    <scope>FUNCTION</scope>
    <scope>INDUCTION</scope>
    <scope>CATALYTIC ACTIVITY</scope>
    <scope>DOMAIN</scope>
    <scope>PATHWAY</scope>
</reference>
<reference key="3">
    <citation type="journal article" date="2015" name="Org. Lett.">
        <title>Elucidation of pyranonigrin biosynthetic pathway reveals a mode of tetramic acid, fused gamma-pyrone, and exo-methylene formation.</title>
        <authorList>
            <person name="Yamamoto T."/>
            <person name="Tsunematsu Y."/>
            <person name="Noguchi H."/>
            <person name="Hotta K."/>
            <person name="Watanabe K."/>
        </authorList>
    </citation>
    <scope>FUNCTION</scope>
    <scope>DISRUPTION PHENOTYPE</scope>
    <scope>PATHWAY</scope>
</reference>
<organism>
    <name type="scientific">Aspergillus niger (strain ATCC MYA-4892 / CBS 513.88 / FGSC A1513)</name>
    <dbReference type="NCBI Taxonomy" id="425011"/>
    <lineage>
        <taxon>Eukaryota</taxon>
        <taxon>Fungi</taxon>
        <taxon>Dikarya</taxon>
        <taxon>Ascomycota</taxon>
        <taxon>Pezizomycotina</taxon>
        <taxon>Eurotiomycetes</taxon>
        <taxon>Eurotiomycetidae</taxon>
        <taxon>Eurotiales</taxon>
        <taxon>Aspergillaceae</taxon>
        <taxon>Aspergillus</taxon>
        <taxon>Aspergillus subgen. Circumdati</taxon>
    </lineage>
</organism>
<name>PYNA_ASPNC</name>
<evidence type="ECO:0000255" key="1"/>
<evidence type="ECO:0000255" key="2">
    <source>
        <dbReference type="PROSITE-ProRule" id="PRU00258"/>
    </source>
</evidence>
<evidence type="ECO:0000255" key="3">
    <source>
        <dbReference type="PROSITE-ProRule" id="PRU01348"/>
    </source>
</evidence>
<evidence type="ECO:0000255" key="4">
    <source>
        <dbReference type="PROSITE-ProRule" id="PRU01363"/>
    </source>
</evidence>
<evidence type="ECO:0000255" key="5">
    <source>
        <dbReference type="PROSITE-ProRule" id="PRU10022"/>
    </source>
</evidence>
<evidence type="ECO:0000256" key="6">
    <source>
        <dbReference type="SAM" id="MobiDB-lite"/>
    </source>
</evidence>
<evidence type="ECO:0000269" key="7">
    <source>
    </source>
</evidence>
<evidence type="ECO:0000269" key="8">
    <source>
    </source>
</evidence>
<evidence type="ECO:0000303" key="9">
    <source>
    </source>
</evidence>
<evidence type="ECO:0000305" key="10"/>
<evidence type="ECO:0000305" key="11">
    <source>
    </source>
</evidence>
<keyword id="KW-0436">Ligase</keyword>
<keyword id="KW-0511">Multifunctional enzyme</keyword>
<keyword id="KW-0596">Phosphopantetheine</keyword>
<keyword id="KW-0597">Phosphoprotein</keyword>
<keyword id="KW-1185">Reference proteome</keyword>
<keyword id="KW-0808">Transferase</keyword>
<protein>
    <recommendedName>
        <fullName evidence="9">Hybrid PKS-NRPS synthetase pynA</fullName>
        <ecNumber evidence="7">2.3.1.-</ecNumber>
        <ecNumber evidence="7">6.3.2.-</ecNumber>
    </recommendedName>
    <alternativeName>
        <fullName evidence="9">Pyranonigrin biosynthesis cluster protein A</fullName>
    </alternativeName>
</protein>
<feature type="chain" id="PRO_0000450056" description="Hybrid PKS-NRPS synthetase pynA">
    <location>
        <begin position="1"/>
        <end position="3902"/>
    </location>
</feature>
<feature type="domain" description="Ketosynthase family 3 (KS3)" evidence="3 11">
    <location>
        <begin position="29"/>
        <end position="441"/>
    </location>
</feature>
<feature type="domain" description="PKS/mFAS DH" evidence="4">
    <location>
        <begin position="945"/>
        <end position="1258"/>
    </location>
</feature>
<feature type="domain" description="Carrier 1" evidence="2 11">
    <location>
        <begin position="2251"/>
        <end position="2328"/>
    </location>
</feature>
<feature type="domain" description="Carrier 2" evidence="2 11">
    <location>
        <begin position="3391"/>
        <end position="3467"/>
    </location>
</feature>
<feature type="region of interest" description="Disordered" evidence="6">
    <location>
        <begin position="1"/>
        <end position="25"/>
    </location>
</feature>
<feature type="region of interest" description="Malonyl-CoA:ACP transacylase (MAT) domain" evidence="1 11">
    <location>
        <begin position="555"/>
        <end position="868"/>
    </location>
</feature>
<feature type="region of interest" description="Dehydratase (DH) domain" evidence="1 11">
    <location>
        <begin position="945"/>
        <end position="1256"/>
    </location>
</feature>
<feature type="region of interest" description="N-terminal hotdog fold" evidence="4">
    <location>
        <begin position="945"/>
        <end position="1080"/>
    </location>
</feature>
<feature type="region of interest" description="C-terminal hotdog fold" evidence="4">
    <location>
        <begin position="1100"/>
        <end position="1258"/>
    </location>
</feature>
<feature type="region of interest" description="Enoyl reductase (ER) domain" evidence="1 11">
    <location>
        <begin position="1629"/>
        <end position="1945"/>
    </location>
</feature>
<feature type="region of interest" description="Ketoreductase (KR) domain" evidence="1 11">
    <location>
        <begin position="1971"/>
        <end position="2143"/>
    </location>
</feature>
<feature type="region of interest" description="Disordered" evidence="6">
    <location>
        <begin position="2337"/>
        <end position="2364"/>
    </location>
</feature>
<feature type="region of interest" description="Condensation (C) domain 7" evidence="1 11">
    <location>
        <begin position="2374"/>
        <end position="2816"/>
    </location>
</feature>
<feature type="region of interest" description="Adenylation (A) domain 8" evidence="1 11">
    <location>
        <begin position="2836"/>
        <end position="3248"/>
    </location>
</feature>
<feature type="region of interest" description="Thioesterase (TE) domain" evidence="1 11">
    <location>
        <begin position="3515"/>
        <end position="3774"/>
    </location>
</feature>
<feature type="compositionally biased region" description="Basic and acidic residues" evidence="6">
    <location>
        <begin position="2337"/>
        <end position="2350"/>
    </location>
</feature>
<feature type="active site" description="For beta-ketoacyl synthase activity" evidence="3">
    <location>
        <position position="201"/>
    </location>
</feature>
<feature type="active site" description="For beta-ketoacyl synthase activity" evidence="3">
    <location>
        <position position="324"/>
    </location>
</feature>
<feature type="active site" description="For beta-ketoacyl synthase activity" evidence="3">
    <location>
        <position position="362"/>
    </location>
</feature>
<feature type="active site" description="For malonyltransferase activity" evidence="5">
    <location>
        <position position="647"/>
    </location>
</feature>
<feature type="active site" description="Proton acceptor; for dehydratase activity" evidence="4">
    <location>
        <position position="977"/>
    </location>
</feature>
<feature type="active site" description="Proton donor; for dehydratase activity" evidence="4">
    <location>
        <position position="1164"/>
    </location>
</feature>
<feature type="modified residue" description="O-(pantetheine 4'-phosphoryl)serine" evidence="2">
    <location>
        <position position="2288"/>
    </location>
</feature>
<feature type="modified residue" description="O-(pantetheine 4'-phosphoryl)serine" evidence="2">
    <location>
        <position position="3427"/>
    </location>
</feature>
<gene>
    <name evidence="9" type="primary">pynA</name>
    <name type="ORF">An11g00250</name>
</gene>